<reference key="1">
    <citation type="journal article" date="2002" name="Proc. Natl. Acad. Sci. U.S.A.">
        <title>Genome sequence of the hyperthermophilic crenarchaeon Pyrobaculum aerophilum.</title>
        <authorList>
            <person name="Fitz-Gibbon S.T."/>
            <person name="Ladner H."/>
            <person name="Kim U.-J."/>
            <person name="Stetter K.O."/>
            <person name="Simon M.I."/>
            <person name="Miller J.H."/>
        </authorList>
    </citation>
    <scope>NUCLEOTIDE SEQUENCE [LARGE SCALE GENOMIC DNA]</scope>
    <source>
        <strain>ATCC 51768 / DSM 7523 / JCM 9630 / CIP 104966 / NBRC 100827 / IM2</strain>
    </source>
</reference>
<gene>
    <name evidence="1" type="primary">ctaB1</name>
    <name type="ordered locus">PAE1333</name>
</gene>
<organism>
    <name type="scientific">Pyrobaculum aerophilum (strain ATCC 51768 / DSM 7523 / JCM 9630 / CIP 104966 / NBRC 100827 / IM2)</name>
    <dbReference type="NCBI Taxonomy" id="178306"/>
    <lineage>
        <taxon>Archaea</taxon>
        <taxon>Thermoproteota</taxon>
        <taxon>Thermoprotei</taxon>
        <taxon>Thermoproteales</taxon>
        <taxon>Thermoproteaceae</taxon>
        <taxon>Pyrobaculum</taxon>
    </lineage>
</organism>
<dbReference type="EC" id="2.5.1.141" evidence="1"/>
<dbReference type="EMBL" id="AE009441">
    <property type="protein sequence ID" value="AAL63414.1"/>
    <property type="molecule type" value="Genomic_DNA"/>
</dbReference>
<dbReference type="RefSeq" id="WP_011007887.1">
    <property type="nucleotide sequence ID" value="NC_003364.1"/>
</dbReference>
<dbReference type="SMR" id="Q8ZXD4"/>
<dbReference type="FunCoup" id="Q8ZXD4">
    <property type="interactions" value="215"/>
</dbReference>
<dbReference type="STRING" id="178306.PAE1333"/>
<dbReference type="EnsemblBacteria" id="AAL63414">
    <property type="protein sequence ID" value="AAL63414"/>
    <property type="gene ID" value="PAE1333"/>
</dbReference>
<dbReference type="GeneID" id="1465653"/>
<dbReference type="KEGG" id="pai:PAE1333"/>
<dbReference type="PATRIC" id="fig|178306.9.peg.988"/>
<dbReference type="eggNOG" id="arCOG00479">
    <property type="taxonomic scope" value="Archaea"/>
</dbReference>
<dbReference type="HOGENOM" id="CLU_029631_0_1_2"/>
<dbReference type="InParanoid" id="Q8ZXD4"/>
<dbReference type="UniPathway" id="UPA00834">
    <property type="reaction ID" value="UER00712"/>
</dbReference>
<dbReference type="Proteomes" id="UP000002439">
    <property type="component" value="Chromosome"/>
</dbReference>
<dbReference type="GO" id="GO:0005886">
    <property type="term" value="C:plasma membrane"/>
    <property type="evidence" value="ECO:0007669"/>
    <property type="project" value="UniProtKB-SubCell"/>
</dbReference>
<dbReference type="GO" id="GO:0008495">
    <property type="term" value="F:protoheme IX farnesyltransferase activity"/>
    <property type="evidence" value="ECO:0000318"/>
    <property type="project" value="GO_Central"/>
</dbReference>
<dbReference type="GO" id="GO:0006783">
    <property type="term" value="P:heme biosynthetic process"/>
    <property type="evidence" value="ECO:0000318"/>
    <property type="project" value="GO_Central"/>
</dbReference>
<dbReference type="GO" id="GO:0048034">
    <property type="term" value="P:heme O biosynthetic process"/>
    <property type="evidence" value="ECO:0007669"/>
    <property type="project" value="UniProtKB-UniRule"/>
</dbReference>
<dbReference type="CDD" id="cd13957">
    <property type="entry name" value="PT_UbiA_Cox10"/>
    <property type="match status" value="1"/>
</dbReference>
<dbReference type="Gene3D" id="1.10.357.140">
    <property type="entry name" value="UbiA prenyltransferase"/>
    <property type="match status" value="1"/>
</dbReference>
<dbReference type="HAMAP" id="MF_00154">
    <property type="entry name" value="CyoE_CtaB"/>
    <property type="match status" value="1"/>
</dbReference>
<dbReference type="InterPro" id="IPR006369">
    <property type="entry name" value="Protohaem_IX_farnesylTrfase"/>
</dbReference>
<dbReference type="InterPro" id="IPR000537">
    <property type="entry name" value="UbiA_prenyltransferase"/>
</dbReference>
<dbReference type="InterPro" id="IPR030470">
    <property type="entry name" value="UbiA_prenylTrfase_CS"/>
</dbReference>
<dbReference type="InterPro" id="IPR044878">
    <property type="entry name" value="UbiA_sf"/>
</dbReference>
<dbReference type="NCBIfam" id="TIGR01473">
    <property type="entry name" value="cyoE_ctaB"/>
    <property type="match status" value="1"/>
</dbReference>
<dbReference type="PANTHER" id="PTHR43448">
    <property type="entry name" value="PROTOHEME IX FARNESYLTRANSFERASE, MITOCHONDRIAL"/>
    <property type="match status" value="1"/>
</dbReference>
<dbReference type="PANTHER" id="PTHR43448:SF2">
    <property type="entry name" value="PROTOHEME IX FARNESYLTRANSFERASE, MITOCHONDRIAL"/>
    <property type="match status" value="1"/>
</dbReference>
<dbReference type="Pfam" id="PF01040">
    <property type="entry name" value="UbiA"/>
    <property type="match status" value="1"/>
</dbReference>
<dbReference type="PROSITE" id="PS00943">
    <property type="entry name" value="UBIA"/>
    <property type="match status" value="1"/>
</dbReference>
<proteinExistence type="inferred from homology"/>
<keyword id="KW-1003">Cell membrane</keyword>
<keyword id="KW-0350">Heme biosynthesis</keyword>
<keyword id="KW-0472">Membrane</keyword>
<keyword id="KW-1185">Reference proteome</keyword>
<keyword id="KW-0808">Transferase</keyword>
<keyword id="KW-0812">Transmembrane</keyword>
<keyword id="KW-1133">Transmembrane helix</keyword>
<comment type="function">
    <text evidence="1">Converts heme B (protoheme IX) to heme O by substitution of the vinyl group on carbon 2 of heme B porphyrin ring with a hydroxyethyl farnesyl side group.</text>
</comment>
<comment type="catalytic activity">
    <reaction evidence="1">
        <text>heme b + (2E,6E)-farnesyl diphosphate + H2O = Fe(II)-heme o + diphosphate</text>
        <dbReference type="Rhea" id="RHEA:28070"/>
        <dbReference type="ChEBI" id="CHEBI:15377"/>
        <dbReference type="ChEBI" id="CHEBI:33019"/>
        <dbReference type="ChEBI" id="CHEBI:60344"/>
        <dbReference type="ChEBI" id="CHEBI:60530"/>
        <dbReference type="ChEBI" id="CHEBI:175763"/>
        <dbReference type="EC" id="2.5.1.141"/>
    </reaction>
</comment>
<comment type="pathway">
    <text evidence="1">Porphyrin-containing compound metabolism; heme O biosynthesis; heme O from protoheme: step 1/1.</text>
</comment>
<comment type="subcellular location">
    <subcellularLocation>
        <location evidence="1">Cell membrane</location>
        <topology evidence="1">Multi-pass membrane protein</topology>
    </subcellularLocation>
</comment>
<comment type="miscellaneous">
    <text evidence="1">Carbon 2 of the heme B porphyrin ring is defined according to the Fischer nomenclature.</text>
</comment>
<comment type="similarity">
    <text evidence="1">Belongs to the UbiA prenyltransferase family. Protoheme IX farnesyltransferase subfamily.</text>
</comment>
<accession>Q8ZXD4</accession>
<name>COXX1_PYRAE</name>
<protein>
    <recommendedName>
        <fullName evidence="1">Protoheme IX farnesyltransferase 1</fullName>
        <ecNumber evidence="1">2.5.1.141</ecNumber>
    </recommendedName>
    <alternativeName>
        <fullName evidence="1">Heme B farnesyltransferase 1</fullName>
    </alternativeName>
    <alternativeName>
        <fullName evidence="1">Heme O synthase 1</fullName>
    </alternativeName>
</protein>
<feature type="chain" id="PRO_0000346089" description="Protoheme IX farnesyltransferase 1">
    <location>
        <begin position="1"/>
        <end position="278"/>
    </location>
</feature>
<feature type="transmembrane region" description="Helical" evidence="1">
    <location>
        <begin position="12"/>
        <end position="32"/>
    </location>
</feature>
<feature type="transmembrane region" description="Helical" evidence="1">
    <location>
        <begin position="35"/>
        <end position="55"/>
    </location>
</feature>
<feature type="transmembrane region" description="Helical" evidence="1">
    <location>
        <begin position="76"/>
        <end position="96"/>
    </location>
</feature>
<feature type="transmembrane region" description="Helical" evidence="1">
    <location>
        <begin position="98"/>
        <end position="118"/>
    </location>
</feature>
<feature type="transmembrane region" description="Helical" evidence="1">
    <location>
        <begin position="129"/>
        <end position="149"/>
    </location>
</feature>
<feature type="transmembrane region" description="Helical" evidence="1">
    <location>
        <begin position="158"/>
        <end position="178"/>
    </location>
</feature>
<feature type="transmembrane region" description="Helical" evidence="1">
    <location>
        <begin position="199"/>
        <end position="221"/>
    </location>
</feature>
<feature type="transmembrane region" description="Helical" evidence="1">
    <location>
        <begin position="226"/>
        <end position="248"/>
    </location>
</feature>
<feature type="transmembrane region" description="Helical" evidence="1">
    <location>
        <begin position="255"/>
        <end position="275"/>
    </location>
</feature>
<sequence>MSSYISLLKPRVIWLLILASVAGYIYGGGGVDSRLFSLLAVAFLSTGGSAAFNHYWERDIDALMTRTFKRPLPSGLITPNAALAYSLALSATGISLGFLLLGLLPGLFVLLGWLFYAVVYTIVLKRRTWLNIFGGGFAGNAVFLGGYALAKGTVDLPAVLISFAIYLWIPSHIWALAFKYRGDYKRAGVPMLPALIKEERAVAVISAINAAAAAYILWLYLQFGGGAGGALVALGVAATIATSIYAAVKKTEEAMWKMYKASSPILALFLIALILSRL</sequence>
<evidence type="ECO:0000255" key="1">
    <source>
        <dbReference type="HAMAP-Rule" id="MF_00154"/>
    </source>
</evidence>